<dbReference type="EC" id="3.6.1.23" evidence="1"/>
<dbReference type="EMBL" id="CR931997">
    <property type="protein sequence ID" value="CAI37246.1"/>
    <property type="molecule type" value="Genomic_DNA"/>
</dbReference>
<dbReference type="RefSeq" id="WP_011273638.1">
    <property type="nucleotide sequence ID" value="NC_007164.1"/>
</dbReference>
<dbReference type="SMR" id="Q4JVB1"/>
<dbReference type="STRING" id="306537.jk1082"/>
<dbReference type="KEGG" id="cjk:jk1082"/>
<dbReference type="PATRIC" id="fig|306537.10.peg.1094"/>
<dbReference type="eggNOG" id="COG0756">
    <property type="taxonomic scope" value="Bacteria"/>
</dbReference>
<dbReference type="HOGENOM" id="CLU_068508_1_3_11"/>
<dbReference type="OrthoDB" id="9809956at2"/>
<dbReference type="UniPathway" id="UPA00610">
    <property type="reaction ID" value="UER00666"/>
</dbReference>
<dbReference type="Proteomes" id="UP000000545">
    <property type="component" value="Chromosome"/>
</dbReference>
<dbReference type="GO" id="GO:0004170">
    <property type="term" value="F:dUTP diphosphatase activity"/>
    <property type="evidence" value="ECO:0007669"/>
    <property type="project" value="UniProtKB-UniRule"/>
</dbReference>
<dbReference type="GO" id="GO:0000287">
    <property type="term" value="F:magnesium ion binding"/>
    <property type="evidence" value="ECO:0007669"/>
    <property type="project" value="UniProtKB-UniRule"/>
</dbReference>
<dbReference type="GO" id="GO:0006226">
    <property type="term" value="P:dUMP biosynthetic process"/>
    <property type="evidence" value="ECO:0007669"/>
    <property type="project" value="UniProtKB-UniRule"/>
</dbReference>
<dbReference type="GO" id="GO:0046081">
    <property type="term" value="P:dUTP catabolic process"/>
    <property type="evidence" value="ECO:0007669"/>
    <property type="project" value="InterPro"/>
</dbReference>
<dbReference type="CDD" id="cd07557">
    <property type="entry name" value="trimeric_dUTPase"/>
    <property type="match status" value="1"/>
</dbReference>
<dbReference type="FunFam" id="2.70.40.10:FF:000008">
    <property type="entry name" value="Deoxyuridine 5'-triphosphate nucleotidohydrolase"/>
    <property type="match status" value="1"/>
</dbReference>
<dbReference type="Gene3D" id="2.70.40.10">
    <property type="match status" value="1"/>
</dbReference>
<dbReference type="HAMAP" id="MF_00116">
    <property type="entry name" value="dUTPase_bact"/>
    <property type="match status" value="1"/>
</dbReference>
<dbReference type="InterPro" id="IPR008181">
    <property type="entry name" value="dUTPase"/>
</dbReference>
<dbReference type="InterPro" id="IPR029054">
    <property type="entry name" value="dUTPase-like"/>
</dbReference>
<dbReference type="InterPro" id="IPR036157">
    <property type="entry name" value="dUTPase-like_sf"/>
</dbReference>
<dbReference type="InterPro" id="IPR033704">
    <property type="entry name" value="dUTPase_trimeric"/>
</dbReference>
<dbReference type="NCBIfam" id="TIGR00576">
    <property type="entry name" value="dut"/>
    <property type="match status" value="1"/>
</dbReference>
<dbReference type="NCBIfam" id="NF001862">
    <property type="entry name" value="PRK00601.1"/>
    <property type="match status" value="1"/>
</dbReference>
<dbReference type="PANTHER" id="PTHR11241">
    <property type="entry name" value="DEOXYURIDINE 5'-TRIPHOSPHATE NUCLEOTIDOHYDROLASE"/>
    <property type="match status" value="1"/>
</dbReference>
<dbReference type="PANTHER" id="PTHR11241:SF0">
    <property type="entry name" value="DEOXYURIDINE 5'-TRIPHOSPHATE NUCLEOTIDOHYDROLASE"/>
    <property type="match status" value="1"/>
</dbReference>
<dbReference type="Pfam" id="PF00692">
    <property type="entry name" value="dUTPase"/>
    <property type="match status" value="1"/>
</dbReference>
<dbReference type="SUPFAM" id="SSF51283">
    <property type="entry name" value="dUTPase-like"/>
    <property type="match status" value="1"/>
</dbReference>
<feature type="chain" id="PRO_0000231407" description="Deoxyuridine 5'-triphosphate nucleotidohydrolase">
    <location>
        <begin position="1"/>
        <end position="155"/>
    </location>
</feature>
<feature type="binding site" evidence="1">
    <location>
        <begin position="71"/>
        <end position="73"/>
    </location>
    <ligand>
        <name>substrate</name>
    </ligand>
</feature>
<feature type="binding site" evidence="1">
    <location>
        <position position="84"/>
    </location>
    <ligand>
        <name>substrate</name>
    </ligand>
</feature>
<feature type="binding site" evidence="1">
    <location>
        <begin position="88"/>
        <end position="90"/>
    </location>
    <ligand>
        <name>substrate</name>
    </ligand>
</feature>
<feature type="binding site" evidence="1">
    <location>
        <position position="98"/>
    </location>
    <ligand>
        <name>substrate</name>
    </ligand>
</feature>
<comment type="function">
    <text evidence="1">This enzyme is involved in nucleotide metabolism: it produces dUMP, the immediate precursor of thymidine nucleotides and it decreases the intracellular concentration of dUTP so that uracil cannot be incorporated into DNA.</text>
</comment>
<comment type="catalytic activity">
    <reaction evidence="1">
        <text>dUTP + H2O = dUMP + diphosphate + H(+)</text>
        <dbReference type="Rhea" id="RHEA:10248"/>
        <dbReference type="ChEBI" id="CHEBI:15377"/>
        <dbReference type="ChEBI" id="CHEBI:15378"/>
        <dbReference type="ChEBI" id="CHEBI:33019"/>
        <dbReference type="ChEBI" id="CHEBI:61555"/>
        <dbReference type="ChEBI" id="CHEBI:246422"/>
        <dbReference type="EC" id="3.6.1.23"/>
    </reaction>
</comment>
<comment type="cofactor">
    <cofactor evidence="1">
        <name>Mg(2+)</name>
        <dbReference type="ChEBI" id="CHEBI:18420"/>
    </cofactor>
</comment>
<comment type="pathway">
    <text evidence="1">Pyrimidine metabolism; dUMP biosynthesis; dUMP from dCTP (dUTP route): step 2/2.</text>
</comment>
<comment type="similarity">
    <text evidence="1">Belongs to the dUTPase family.</text>
</comment>
<protein>
    <recommendedName>
        <fullName evidence="1">Deoxyuridine 5'-triphosphate nucleotidohydrolase</fullName>
        <shortName evidence="1">dUTPase</shortName>
        <ecNumber evidence="1">3.6.1.23</ecNumber>
    </recommendedName>
    <alternativeName>
        <fullName evidence="1">dUTP pyrophosphatase</fullName>
    </alternativeName>
</protein>
<reference key="1">
    <citation type="journal article" date="2005" name="J. Bacteriol.">
        <title>Complete genome sequence and analysis of the multiresistant nosocomial pathogen Corynebacterium jeikeium K411, a lipid-requiring bacterium of the human skin flora.</title>
        <authorList>
            <person name="Tauch A."/>
            <person name="Kaiser O."/>
            <person name="Hain T."/>
            <person name="Goesmann A."/>
            <person name="Weisshaar B."/>
            <person name="Albersmeier A."/>
            <person name="Bekel T."/>
            <person name="Bischoff N."/>
            <person name="Brune I."/>
            <person name="Chakraborty T."/>
            <person name="Kalinowski J."/>
            <person name="Meyer F."/>
            <person name="Rupp O."/>
            <person name="Schneiker S."/>
            <person name="Viehoever P."/>
            <person name="Puehler A."/>
        </authorList>
    </citation>
    <scope>NUCLEOTIDE SEQUENCE [LARGE SCALE GENOMIC DNA]</scope>
    <source>
        <strain>K411</strain>
    </source>
</reference>
<organism>
    <name type="scientific">Corynebacterium jeikeium (strain K411)</name>
    <dbReference type="NCBI Taxonomy" id="306537"/>
    <lineage>
        <taxon>Bacteria</taxon>
        <taxon>Bacillati</taxon>
        <taxon>Actinomycetota</taxon>
        <taxon>Actinomycetes</taxon>
        <taxon>Mycobacteriales</taxon>
        <taxon>Corynebacteriaceae</taxon>
        <taxon>Corynebacterium</taxon>
    </lineage>
</organism>
<accession>Q4JVB1</accession>
<proteinExistence type="inferred from homology"/>
<gene>
    <name evidence="1" type="primary">dut</name>
    <name type="ordered locus">jk1082</name>
</gene>
<name>DUT_CORJK</name>
<keyword id="KW-0378">Hydrolase</keyword>
<keyword id="KW-0460">Magnesium</keyword>
<keyword id="KW-0479">Metal-binding</keyword>
<keyword id="KW-0546">Nucleotide metabolism</keyword>
<keyword id="KW-1185">Reference proteome</keyword>
<evidence type="ECO:0000255" key="1">
    <source>
        <dbReference type="HAMAP-Rule" id="MF_00116"/>
    </source>
</evidence>
<sequence length="155" mass="16458">MTLKRNGNDAPLRIVRLDKELPLPRRAHPTDAGIDLYTAQDVTIAPGCRELVGTGIAIALPVGTVGLVHPRSGLALKKGLSIVNAPGTIDADYRGEIKVCLINLDPEEPIELARGERIAQLLVQEVSLCDVEEVNSVEELGVTVRGESGYGSTGV</sequence>